<proteinExistence type="inferred from homology"/>
<reference key="1">
    <citation type="journal article" date="1997" name="Mol. Gen. Genet.">
        <title>Characterization and mutagenesis of the leucine biosynthetic genes of Azotobacter vinelandii: an analysis of the rarity of amino acid auxotrophs.</title>
        <authorList>
            <person name="Manna A.C."/>
            <person name="Das H.K."/>
        </authorList>
    </citation>
    <scope>NUCLEOTIDE SEQUENCE [GENOMIC DNA]</scope>
    <source>
        <strain>ATCC 13705 / OP1 / DSM 366 / NCIMB 11614 / LMG 3878 / UW</strain>
    </source>
</reference>
<accession>P96199</accession>
<dbReference type="EMBL" id="Y11280">
    <property type="protein sequence ID" value="CAA72153.1"/>
    <property type="molecule type" value="Genomic_DNA"/>
</dbReference>
<dbReference type="SMR" id="P96199"/>
<dbReference type="GO" id="GO:0051287">
    <property type="term" value="F:NAD binding"/>
    <property type="evidence" value="ECO:0007669"/>
    <property type="project" value="InterPro"/>
</dbReference>
<dbReference type="GO" id="GO:0016620">
    <property type="term" value="F:oxidoreductase activity, acting on the aldehyde or oxo group of donors, NAD or NADP as acceptor"/>
    <property type="evidence" value="ECO:0007669"/>
    <property type="project" value="InterPro"/>
</dbReference>
<dbReference type="GO" id="GO:0046983">
    <property type="term" value="F:protein dimerization activity"/>
    <property type="evidence" value="ECO:0007669"/>
    <property type="project" value="InterPro"/>
</dbReference>
<dbReference type="GO" id="GO:0008652">
    <property type="term" value="P:amino acid biosynthetic process"/>
    <property type="evidence" value="ECO:0007669"/>
    <property type="project" value="InterPro"/>
</dbReference>
<dbReference type="CDD" id="cd18129">
    <property type="entry name" value="ASADH_C_USG1_like"/>
    <property type="match status" value="1"/>
</dbReference>
<dbReference type="CDD" id="cd17894">
    <property type="entry name" value="ASADH_USG1_N"/>
    <property type="match status" value="1"/>
</dbReference>
<dbReference type="Gene3D" id="3.30.360.10">
    <property type="entry name" value="Dihydrodipicolinate Reductase, domain 2"/>
    <property type="match status" value="1"/>
</dbReference>
<dbReference type="Gene3D" id="3.40.50.720">
    <property type="entry name" value="NAD(P)-binding Rossmann-like Domain"/>
    <property type="match status" value="1"/>
</dbReference>
<dbReference type="InterPro" id="IPR036291">
    <property type="entry name" value="NAD(P)-bd_dom_sf"/>
</dbReference>
<dbReference type="InterPro" id="IPR000534">
    <property type="entry name" value="Semialdehyde_DH_NAD-bd"/>
</dbReference>
<dbReference type="InterPro" id="IPR012280">
    <property type="entry name" value="Semialdhyde_DH_dimer_dom"/>
</dbReference>
<dbReference type="NCBIfam" id="NF004224">
    <property type="entry name" value="PRK05671.1"/>
    <property type="match status" value="1"/>
</dbReference>
<dbReference type="NCBIfam" id="NF011456">
    <property type="entry name" value="PRK14874.1"/>
    <property type="match status" value="1"/>
</dbReference>
<dbReference type="PANTHER" id="PTHR46278:SF2">
    <property type="entry name" value="ASPARTATE-SEMIALDEHYDE DEHYDROGENASE"/>
    <property type="match status" value="1"/>
</dbReference>
<dbReference type="PANTHER" id="PTHR46278">
    <property type="entry name" value="DEHYDROGENASE, PUTATIVE-RELATED"/>
    <property type="match status" value="1"/>
</dbReference>
<dbReference type="Pfam" id="PF01118">
    <property type="entry name" value="Semialdhyde_dh"/>
    <property type="match status" value="1"/>
</dbReference>
<dbReference type="Pfam" id="PF02774">
    <property type="entry name" value="Semialdhyde_dhC"/>
    <property type="match status" value="1"/>
</dbReference>
<dbReference type="PIRSF" id="PIRSF000148">
    <property type="entry name" value="ASA_dh"/>
    <property type="match status" value="1"/>
</dbReference>
<dbReference type="SMART" id="SM00859">
    <property type="entry name" value="Semialdhyde_dh"/>
    <property type="match status" value="1"/>
</dbReference>
<dbReference type="SUPFAM" id="SSF55347">
    <property type="entry name" value="Glyceraldehyde-3-phosphate dehydrogenase-like, C-terminal domain"/>
    <property type="match status" value="1"/>
</dbReference>
<dbReference type="SUPFAM" id="SSF51735">
    <property type="entry name" value="NAD(P)-binding Rossmann-fold domains"/>
    <property type="match status" value="1"/>
</dbReference>
<name>USG_AZOVI</name>
<comment type="similarity">
    <text evidence="1">Belongs to the aspartate-semialdehyde dehydrogenase family.</text>
</comment>
<evidence type="ECO:0000305" key="1"/>
<gene>
    <name type="primary">usg</name>
    <name type="synonym">usg1</name>
</gene>
<feature type="chain" id="PRO_0000141401" description="USG-1 protein homolog">
    <location>
        <begin position="1"/>
        <end position="336"/>
    </location>
</feature>
<sequence>MSPAIDIAIVGATGTVGAAIVEILEERDFPVGQLHLLASPASAGKSVSFKGRNLRVKSIEAFDFAQVRLVFFAAGQAVTRQYASQARAAGCMLVDLSGALPLQQAPRVVAEVNPQVLEKLEAPCQVTSPASQVVALALALAPLRPLVRWRHLGVTACLPVSSLGREGVAELARQTTELLNGRPPKPRFFDRQIAFNLLGRVGDSDTAGHTGLERRLVEESRQVLDAPELKISVTCLMAPVFFGDSLSLAVQASQAIDPSAVRAALERAPGLELIEPDDCPTVIGDAVGQDVAYVGRVRTGVDDACELDLWIASDNVRKGSALNAVQLAELLIKQGR</sequence>
<protein>
    <recommendedName>
        <fullName>USG-1 protein homolog</fullName>
    </recommendedName>
</protein>
<organism>
    <name type="scientific">Azotobacter vinelandii</name>
    <dbReference type="NCBI Taxonomy" id="354"/>
    <lineage>
        <taxon>Bacteria</taxon>
        <taxon>Pseudomonadati</taxon>
        <taxon>Pseudomonadota</taxon>
        <taxon>Gammaproteobacteria</taxon>
        <taxon>Pseudomonadales</taxon>
        <taxon>Pseudomonadaceae</taxon>
        <taxon>Azotobacter</taxon>
    </lineage>
</organism>